<comment type="function">
    <text evidence="1">Degradation of external UDP-glucose to uridine monophosphate and glucose-1-phosphate, which can then be used by the cell.</text>
</comment>
<comment type="catalytic activity">
    <reaction>
        <text>UDP-sugar + H2O = UMP + alpha-D-aldose 1-phosphate.</text>
        <dbReference type="EC" id="3.6.1.45"/>
    </reaction>
</comment>
<comment type="catalytic activity">
    <reaction>
        <text>a ribonucleoside 5'-phosphate + H2O = a ribonucleoside + phosphate</text>
        <dbReference type="Rhea" id="RHEA:12484"/>
        <dbReference type="ChEBI" id="CHEBI:15377"/>
        <dbReference type="ChEBI" id="CHEBI:18254"/>
        <dbReference type="ChEBI" id="CHEBI:43474"/>
        <dbReference type="ChEBI" id="CHEBI:58043"/>
        <dbReference type="EC" id="3.1.3.5"/>
    </reaction>
</comment>
<comment type="cofactor">
    <cofactor evidence="1">
        <name>Co(2+)</name>
        <dbReference type="ChEBI" id="CHEBI:48828"/>
    </cofactor>
    <text evidence="1">Divalent metal cations. Most likely Co(2+).</text>
</comment>
<comment type="subcellular location">
    <subcellularLocation>
        <location evidence="3">Periplasm</location>
    </subcellularLocation>
</comment>
<comment type="similarity">
    <text evidence="3">Belongs to the 5'-nucleotidase family.</text>
</comment>
<comment type="sequence caution" evidence="3">
    <conflict type="erroneous initiation">
        <sequence resource="EMBL-CDS" id="AAC60782"/>
    </conflict>
</comment>
<proteinExistence type="inferred from homology"/>
<sequence length="550" mass="60383">MRFSLSTTAAALAVSLAFAPGWAVAWEKDKTYDITILHTNDHHGHFWQNDHGEYGLAAQKTLVDDIRKQVAAAGGSLLLLSGGDINTGVPESDLQDAEPDFRGMNLVGYDAMAIGNHEFDNPLSVLRQQEKWATFPLLSANIYQKSTQQRLFKPYALFDKQGVKIAVIGLTTDDTAKIGNPEYFTDIEFRVPATEAKQVVEQLRKTEKPDIIIAATHMGHYDDGKHGSNAPGDVEMARSLPAGYLDMIVGGHSQDPVCMASENHKQADYVPGTPCAPDRQNGTWIVQAHEWGKYVGRADFKFRNGELKLVSYQLIPINLKKKVEKADGTSERIFYTQEIAQDPSMLKLLTPFEQQGKAQLDVKVGSVNGKLEGDRSKVRFEQTNLARLLLAAQMERAGADFAVMSGGGVRDSIDAGDITYKDVLKVQPFGNTLVYADMKGSEVEKYLAVVANKKVDSGAYAQFANVSLVADGKGVSNVKIQGKPLDPNKTYRLATLNFNALGGDGYPKIDTLPSYVNTGFIDAEVLKQYIEKHSPLDASQYQPKGEIVYK</sequence>
<reference key="1">
    <citation type="journal article" date="2006" name="PLoS Genet.">
        <title>The complete genome sequence and comparative genome analysis of the high pathogenicity Yersinia enterocolitica strain 8081.</title>
        <authorList>
            <person name="Thomson N.R."/>
            <person name="Howard S."/>
            <person name="Wren B.W."/>
            <person name="Holden M.T.G."/>
            <person name="Crossman L."/>
            <person name="Challis G.L."/>
            <person name="Churcher C."/>
            <person name="Mungall K."/>
            <person name="Brooks K."/>
            <person name="Chillingworth T."/>
            <person name="Feltwell T."/>
            <person name="Abdellah Z."/>
            <person name="Hauser H."/>
            <person name="Jagels K."/>
            <person name="Maddison M."/>
            <person name="Moule S."/>
            <person name="Sanders M."/>
            <person name="Whitehead S."/>
            <person name="Quail M.A."/>
            <person name="Dougan G."/>
            <person name="Parkhill J."/>
            <person name="Prentice M.B."/>
        </authorList>
    </citation>
    <scope>NUCLEOTIDE SEQUENCE [LARGE SCALE GENOMIC DNA]</scope>
    <source>
        <strain>NCTC 13174 / 8081</strain>
    </source>
</reference>
<reference key="2">
    <citation type="submission" date="1996-03" db="EMBL/GenBank/DDBJ databases">
        <authorList>
            <person name="Zhang L."/>
            <person name="Toivanen P."/>
            <person name="Skurnik M."/>
        </authorList>
    </citation>
    <scope>NUCLEOTIDE SEQUENCE [GENOMIC DNA] OF 1-374</scope>
</reference>
<name>USHA_YERE8</name>
<evidence type="ECO:0000250" key="1"/>
<evidence type="ECO:0000255" key="2"/>
<evidence type="ECO:0000305" key="3"/>
<feature type="signal peptide" evidence="2">
    <location>
        <begin position="1"/>
        <end position="25"/>
    </location>
</feature>
<feature type="chain" id="PRO_0000000034" description="Protein UshA">
    <location>
        <begin position="26"/>
        <end position="550"/>
    </location>
</feature>
<feature type="binding site" evidence="1">
    <location>
        <position position="41"/>
    </location>
    <ligand>
        <name>a divalent metal cation</name>
        <dbReference type="ChEBI" id="CHEBI:60240"/>
        <label>1</label>
    </ligand>
</feature>
<feature type="binding site" evidence="1">
    <location>
        <position position="43"/>
    </location>
    <ligand>
        <name>a divalent metal cation</name>
        <dbReference type="ChEBI" id="CHEBI:60240"/>
        <label>1</label>
    </ligand>
</feature>
<feature type="binding site" evidence="1">
    <location>
        <position position="84"/>
    </location>
    <ligand>
        <name>a divalent metal cation</name>
        <dbReference type="ChEBI" id="CHEBI:60240"/>
        <label>1</label>
    </ligand>
</feature>
<feature type="binding site" evidence="1">
    <location>
        <position position="84"/>
    </location>
    <ligand>
        <name>a divalent metal cation</name>
        <dbReference type="ChEBI" id="CHEBI:60240"/>
        <label>2</label>
    </ligand>
</feature>
<feature type="binding site" evidence="1">
    <location>
        <position position="116"/>
    </location>
    <ligand>
        <name>a divalent metal cation</name>
        <dbReference type="ChEBI" id="CHEBI:60240"/>
        <label>2</label>
    </ligand>
</feature>
<feature type="binding site" evidence="1">
    <location>
        <position position="217"/>
    </location>
    <ligand>
        <name>a divalent metal cation</name>
        <dbReference type="ChEBI" id="CHEBI:60240"/>
        <label>2</label>
    </ligand>
</feature>
<feature type="binding site" evidence="1">
    <location>
        <position position="252"/>
    </location>
    <ligand>
        <name>a divalent metal cation</name>
        <dbReference type="ChEBI" id="CHEBI:60240"/>
        <label>2</label>
    </ligand>
</feature>
<feature type="binding site" evidence="1">
    <location>
        <position position="254"/>
    </location>
    <ligand>
        <name>a divalent metal cation</name>
        <dbReference type="ChEBI" id="CHEBI:60240"/>
        <label>1</label>
    </ligand>
</feature>
<feature type="binding site" evidence="1">
    <location>
        <begin position="375"/>
        <end position="379"/>
    </location>
    <ligand>
        <name>substrate</name>
    </ligand>
</feature>
<feature type="binding site" evidence="1">
    <location>
        <begin position="498"/>
        <end position="504"/>
    </location>
    <ligand>
        <name>substrate</name>
    </ligand>
</feature>
<feature type="site" description="Transition state stabilizer" evidence="1">
    <location>
        <position position="117"/>
    </location>
</feature>
<feature type="site" description="Transition state stabilizer" evidence="1">
    <location>
        <position position="120"/>
    </location>
</feature>
<feature type="disulfide bond" evidence="1">
    <location>
        <begin position="258"/>
        <end position="275"/>
    </location>
</feature>
<feature type="sequence conflict" description="In Ref. 2; AAC60782." evidence="3" ref="2">
    <original>V</original>
    <variation>A</variation>
    <location>
        <position position="24"/>
    </location>
</feature>
<feature type="sequence conflict" description="In Ref. 2; AAC60782." evidence="3" ref="2">
    <original>W</original>
    <variation>C</variation>
    <location>
        <position position="47"/>
    </location>
</feature>
<feature type="sequence conflict" description="In Ref. 2; AAC60782." evidence="3" ref="2">
    <original>AAGGSLLLLSGG</original>
    <variation>RSRGKLVVALRW</variation>
    <location>
        <begin position="72"/>
        <end position="83"/>
    </location>
</feature>
<feature type="sequence conflict" description="In Ref. 2; AAC60782." evidence="3" ref="2">
    <location>
        <position position="126"/>
    </location>
</feature>
<feature type="sequence conflict" description="In Ref. 2; AAC60782." evidence="3" ref="2">
    <original>QE</original>
    <variation>HQ</variation>
    <location>
        <begin position="129"/>
        <end position="130"/>
    </location>
</feature>
<dbReference type="EC" id="3.6.1.45"/>
<dbReference type="EC" id="3.1.3.5"/>
<dbReference type="EMBL" id="AM286415">
    <property type="protein sequence ID" value="CAL13101.1"/>
    <property type="molecule type" value="Genomic_DNA"/>
</dbReference>
<dbReference type="EMBL" id="U46859">
    <property type="protein sequence ID" value="AAC60782.1"/>
    <property type="status" value="ALT_INIT"/>
    <property type="molecule type" value="Genomic_DNA"/>
</dbReference>
<dbReference type="RefSeq" id="WP_011816863.1">
    <property type="nucleotide sequence ID" value="NC_008800.1"/>
</dbReference>
<dbReference type="RefSeq" id="YP_001007248.1">
    <property type="nucleotide sequence ID" value="NC_008800.1"/>
</dbReference>
<dbReference type="SMR" id="Q56878"/>
<dbReference type="KEGG" id="yen:YE3066"/>
<dbReference type="PATRIC" id="fig|393305.7.peg.3261"/>
<dbReference type="eggNOG" id="COG0737">
    <property type="taxonomic scope" value="Bacteria"/>
</dbReference>
<dbReference type="HOGENOM" id="CLU_005854_7_0_6"/>
<dbReference type="OrthoDB" id="9803927at2"/>
<dbReference type="Proteomes" id="UP000000642">
    <property type="component" value="Chromosome"/>
</dbReference>
<dbReference type="GO" id="GO:0030288">
    <property type="term" value="C:outer membrane-bounded periplasmic space"/>
    <property type="evidence" value="ECO:0007669"/>
    <property type="project" value="TreeGrafter"/>
</dbReference>
<dbReference type="GO" id="GO:0008253">
    <property type="term" value="F:5'-nucleotidase activity"/>
    <property type="evidence" value="ECO:0007669"/>
    <property type="project" value="UniProtKB-EC"/>
</dbReference>
<dbReference type="GO" id="GO:0046872">
    <property type="term" value="F:metal ion binding"/>
    <property type="evidence" value="ECO:0007669"/>
    <property type="project" value="UniProtKB-KW"/>
</dbReference>
<dbReference type="GO" id="GO:0000166">
    <property type="term" value="F:nucleotide binding"/>
    <property type="evidence" value="ECO:0007669"/>
    <property type="project" value="UniProtKB-KW"/>
</dbReference>
<dbReference type="GO" id="GO:0008768">
    <property type="term" value="F:UDP-sugar diphosphatase activity"/>
    <property type="evidence" value="ECO:0007669"/>
    <property type="project" value="UniProtKB-EC"/>
</dbReference>
<dbReference type="GO" id="GO:0009166">
    <property type="term" value="P:nucleotide catabolic process"/>
    <property type="evidence" value="ECO:0007669"/>
    <property type="project" value="InterPro"/>
</dbReference>
<dbReference type="CDD" id="cd07405">
    <property type="entry name" value="MPP_UshA_N"/>
    <property type="match status" value="1"/>
</dbReference>
<dbReference type="FunFam" id="3.60.21.10:FF:000025">
    <property type="entry name" value="Protein UshA"/>
    <property type="match status" value="1"/>
</dbReference>
<dbReference type="FunFam" id="3.90.780.10:FF:000003">
    <property type="entry name" value="Protein UshA"/>
    <property type="match status" value="1"/>
</dbReference>
<dbReference type="Gene3D" id="3.60.21.10">
    <property type="match status" value="1"/>
</dbReference>
<dbReference type="Gene3D" id="3.90.780.10">
    <property type="entry name" value="5'-Nucleotidase, C-terminal domain"/>
    <property type="match status" value="1"/>
</dbReference>
<dbReference type="InterPro" id="IPR008334">
    <property type="entry name" value="5'-Nucleotdase_C"/>
</dbReference>
<dbReference type="InterPro" id="IPR036907">
    <property type="entry name" value="5'-Nucleotdase_C_sf"/>
</dbReference>
<dbReference type="InterPro" id="IPR006146">
    <property type="entry name" value="5'-Nucleotdase_CS"/>
</dbReference>
<dbReference type="InterPro" id="IPR006179">
    <property type="entry name" value="5_nucleotidase/apyrase"/>
</dbReference>
<dbReference type="InterPro" id="IPR004843">
    <property type="entry name" value="Calcineurin-like_PHP_ApaH"/>
</dbReference>
<dbReference type="InterPro" id="IPR029052">
    <property type="entry name" value="Metallo-depent_PP-like"/>
</dbReference>
<dbReference type="NCBIfam" id="NF007109">
    <property type="entry name" value="PRK09558.1"/>
    <property type="match status" value="1"/>
</dbReference>
<dbReference type="PANTHER" id="PTHR11575">
    <property type="entry name" value="5'-NUCLEOTIDASE-RELATED"/>
    <property type="match status" value="1"/>
</dbReference>
<dbReference type="PANTHER" id="PTHR11575:SF46">
    <property type="entry name" value="PROTEIN USHA"/>
    <property type="match status" value="1"/>
</dbReference>
<dbReference type="Pfam" id="PF02872">
    <property type="entry name" value="5_nucleotid_C"/>
    <property type="match status" value="1"/>
</dbReference>
<dbReference type="Pfam" id="PF00149">
    <property type="entry name" value="Metallophos"/>
    <property type="match status" value="1"/>
</dbReference>
<dbReference type="PRINTS" id="PR01607">
    <property type="entry name" value="APYRASEFAMLY"/>
</dbReference>
<dbReference type="SUPFAM" id="SSF55816">
    <property type="entry name" value="5'-nucleotidase (syn. UDP-sugar hydrolase), C-terminal domain"/>
    <property type="match status" value="1"/>
</dbReference>
<dbReference type="SUPFAM" id="SSF56300">
    <property type="entry name" value="Metallo-dependent phosphatases"/>
    <property type="match status" value="1"/>
</dbReference>
<dbReference type="PROSITE" id="PS00785">
    <property type="entry name" value="5_NUCLEOTIDASE_1"/>
    <property type="match status" value="1"/>
</dbReference>
<dbReference type="PROSITE" id="PS00786">
    <property type="entry name" value="5_NUCLEOTIDASE_2"/>
    <property type="match status" value="1"/>
</dbReference>
<protein>
    <recommendedName>
        <fullName>Protein UshA</fullName>
    </recommendedName>
    <domain>
        <recommendedName>
            <fullName>UDP-sugar hydrolase</fullName>
            <ecNumber>3.6.1.45</ecNumber>
        </recommendedName>
        <alternativeName>
            <fullName>UDP-sugar diphosphatase</fullName>
        </alternativeName>
        <alternativeName>
            <fullName>UDP-sugar pyrophosphatase</fullName>
        </alternativeName>
    </domain>
    <domain>
        <recommendedName>
            <fullName>5'-nucleotidase</fullName>
            <shortName>5'-NT</shortName>
            <ecNumber>3.1.3.5</ecNumber>
        </recommendedName>
    </domain>
</protein>
<gene>
    <name type="primary">ushA</name>
    <name type="ordered locus">YE3066</name>
</gene>
<keyword id="KW-0170">Cobalt</keyword>
<keyword id="KW-1015">Disulfide bond</keyword>
<keyword id="KW-0378">Hydrolase</keyword>
<keyword id="KW-0479">Metal-binding</keyword>
<keyword id="KW-0547">Nucleotide-binding</keyword>
<keyword id="KW-0574">Periplasm</keyword>
<keyword id="KW-0732">Signal</keyword>
<organism>
    <name type="scientific">Yersinia enterocolitica serotype O:8 / biotype 1B (strain NCTC 13174 / 8081)</name>
    <dbReference type="NCBI Taxonomy" id="393305"/>
    <lineage>
        <taxon>Bacteria</taxon>
        <taxon>Pseudomonadati</taxon>
        <taxon>Pseudomonadota</taxon>
        <taxon>Gammaproteobacteria</taxon>
        <taxon>Enterobacterales</taxon>
        <taxon>Yersiniaceae</taxon>
        <taxon>Yersinia</taxon>
    </lineage>
</organism>
<accession>Q56878</accession>
<accession>A1JN00</accession>